<protein>
    <recommendedName>
        <fullName evidence="2">Terminase, large subunit</fullName>
    </recommendedName>
    <alternativeName>
        <fullName evidence="2">DNA-packaging protein</fullName>
    </alternativeName>
    <alternativeName>
        <fullName evidence="4">DNA-packaging protein gp80</fullName>
    </alternativeName>
    <alternativeName>
        <fullName evidence="4">Gene product 80</fullName>
        <shortName evidence="4">gp80</shortName>
    </alternativeName>
    <domain>
        <recommendedName>
            <fullName evidence="2">ATPase</fullName>
            <ecNumber evidence="2">3.6.4.-</ecNumber>
        </recommendedName>
    </domain>
    <domain>
        <recommendedName>
            <fullName evidence="2">Endonuclease</fullName>
            <ecNumber evidence="2 5">3.1.21.-</ecNumber>
        </recommendedName>
    </domain>
</protein>
<organismHost>
    <name type="scientific">Thermus thermophilus</name>
    <dbReference type="NCBI Taxonomy" id="274"/>
</organismHost>
<sequence>MKRLRPSDKFFELLGYKPHHVQLAIHRSTAKRRVACLGRQSGKSEAASVEAVFELFARPGSQGWIIAPTYDQAEIIFGRVVEKVERLSEVFPTTEVQLQRRRLRLLVHHYDRPVNAPGAKRVATSEFRGKSADRPDNLRGATLDFVILDEAAMIPFSVWSEAIEPTLSVRDGWALIISTPKGLNWFYEFFLMGWRGGLKEGIPNSGINQTHPDFESFHAASWDVWPERREWYMERRLYIPDLEFRQEYGAEFVSHSNSVFSGLDMLILLPYERRGTRLVVEDYRPDHIYCIGADFGKNQDYSVFSVLDLDTGAIACLERMNGATWSDQVARLKALSEDYGHAYVVADTWGVGDAIAEELDAQGINYTPLPVKSSSVKEQLISNLALLMEKGQVAVPNDKTILDELRNFRYYRTASGNQVMRAYGRGHDDIVMSLALAYSQYEGKDGYKFELAEERPSKLKHEESVMSLVEDDFTDLELANRAFSA</sequence>
<organism>
    <name type="scientific">Thermus phage G20c</name>
    <name type="common">Thermus thermophilus phage G20c</name>
    <dbReference type="NCBI Taxonomy" id="1406341"/>
    <lineage>
        <taxon>Viruses</taxon>
        <taxon>Duplodnaviria</taxon>
        <taxon>Heunggongvirae</taxon>
        <taxon>Uroviricota</taxon>
        <taxon>Caudoviricetes</taxon>
        <taxon>Oshimavirus</taxon>
    </lineage>
</organism>
<dbReference type="EC" id="3.6.4.-" evidence="2"/>
<dbReference type="EC" id="3.1.21.-" evidence="2 5"/>
<dbReference type="EMBL" id="KX987127">
    <property type="protein sequence ID" value="API81888.1"/>
    <property type="molecule type" value="Genomic_DNA"/>
</dbReference>
<dbReference type="PDB" id="5M1F">
    <property type="method" value="X-ray"/>
    <property type="resolution" value="2.15 A"/>
    <property type="chains" value="A=257-443"/>
</dbReference>
<dbReference type="PDB" id="5M1K">
    <property type="method" value="X-ray"/>
    <property type="resolution" value="1.20 A"/>
    <property type="chains" value="A/B=1-191"/>
</dbReference>
<dbReference type="PDB" id="5M1N">
    <property type="method" value="X-ray"/>
    <property type="resolution" value="1.20 A"/>
    <property type="chains" value="A/B=1-191"/>
</dbReference>
<dbReference type="PDB" id="5M1O">
    <property type="method" value="X-ray"/>
    <property type="resolution" value="1.60 A"/>
    <property type="chains" value="A/B=1-191"/>
</dbReference>
<dbReference type="PDB" id="5M1P">
    <property type="method" value="X-ray"/>
    <property type="resolution" value="1.10 A"/>
    <property type="chains" value="A/B=1-191"/>
</dbReference>
<dbReference type="PDB" id="5M1Q">
    <property type="method" value="X-ray"/>
    <property type="resolution" value="1.45 A"/>
    <property type="chains" value="A=1-187"/>
</dbReference>
<dbReference type="PDBsum" id="5M1F"/>
<dbReference type="PDBsum" id="5M1K"/>
<dbReference type="PDBsum" id="5M1N"/>
<dbReference type="PDBsum" id="5M1O"/>
<dbReference type="PDBsum" id="5M1P"/>
<dbReference type="PDBsum" id="5M1Q"/>
<dbReference type="SMR" id="A0A1L4BKS3"/>
<dbReference type="Proteomes" id="UP000223104">
    <property type="component" value="Genome"/>
</dbReference>
<dbReference type="GO" id="GO:0098009">
    <property type="term" value="C:viral terminase, large subunit"/>
    <property type="evidence" value="ECO:0007669"/>
    <property type="project" value="UniProtKB-UniRule"/>
</dbReference>
<dbReference type="GO" id="GO:0005524">
    <property type="term" value="F:ATP binding"/>
    <property type="evidence" value="ECO:0007669"/>
    <property type="project" value="UniProtKB-KW"/>
</dbReference>
<dbReference type="GO" id="GO:0016887">
    <property type="term" value="F:ATP hydrolysis activity"/>
    <property type="evidence" value="ECO:0007669"/>
    <property type="project" value="InterPro"/>
</dbReference>
<dbReference type="GO" id="GO:0004519">
    <property type="term" value="F:endonuclease activity"/>
    <property type="evidence" value="ECO:0007669"/>
    <property type="project" value="UniProtKB-UniRule"/>
</dbReference>
<dbReference type="GO" id="GO:0046872">
    <property type="term" value="F:metal ion binding"/>
    <property type="evidence" value="ECO:0007669"/>
    <property type="project" value="UniProtKB-UniRule"/>
</dbReference>
<dbReference type="GO" id="GO:0051276">
    <property type="term" value="P:chromosome organization"/>
    <property type="evidence" value="ECO:0007669"/>
    <property type="project" value="UniProtKB-UniRule"/>
</dbReference>
<dbReference type="GO" id="GO:0019073">
    <property type="term" value="P:viral DNA genome packaging"/>
    <property type="evidence" value="ECO:0007669"/>
    <property type="project" value="UniProtKB-UniRule"/>
</dbReference>
<dbReference type="Gene3D" id="3.30.420.240">
    <property type="match status" value="1"/>
</dbReference>
<dbReference type="Gene3D" id="3.40.50.300">
    <property type="entry name" value="P-loop containing nucleotide triphosphate hydrolases"/>
    <property type="match status" value="1"/>
</dbReference>
<dbReference type="HAMAP" id="MF_04146">
    <property type="entry name" value="TERL_T4"/>
    <property type="match status" value="1"/>
</dbReference>
<dbReference type="InterPro" id="IPR027417">
    <property type="entry name" value="P-loop_NTPase"/>
</dbReference>
<dbReference type="InterPro" id="IPR035421">
    <property type="entry name" value="Terminase_6C"/>
</dbReference>
<dbReference type="InterPro" id="IPR044267">
    <property type="entry name" value="Terminase_large_su_gp17-like"/>
</dbReference>
<dbReference type="Pfam" id="PF17289">
    <property type="entry name" value="Terminase_6C"/>
    <property type="match status" value="1"/>
</dbReference>
<dbReference type="Pfam" id="PF03237">
    <property type="entry name" value="Terminase_6N"/>
    <property type="match status" value="1"/>
</dbReference>
<keyword id="KW-0002">3D-structure</keyword>
<keyword id="KW-0067">ATP-binding</keyword>
<keyword id="KW-0255">Endonuclease</keyword>
<keyword id="KW-0378">Hydrolase</keyword>
<keyword id="KW-0460">Magnesium</keyword>
<keyword id="KW-0479">Metal-binding</keyword>
<keyword id="KW-0540">Nuclease</keyword>
<keyword id="KW-0547">Nucleotide-binding</keyword>
<keyword id="KW-0231">Viral genome packaging</keyword>
<keyword id="KW-1188">Viral release from host cell</keyword>
<reference evidence="7 8 9 10 11" key="1">
    <citation type="journal article" date="2017" name="Nucleic Acids Res.">
        <title>Viral genome packaging terminase cleaves DNA using the canonical RuvC-like two-metal catalysis mechanism.</title>
        <authorList>
            <person name="Xu R.G."/>
            <person name="Jenkins H.T."/>
            <person name="Chechik M."/>
            <person name="Blagova E.V."/>
            <person name="Lopatina A."/>
            <person name="Klimuk E."/>
            <person name="Minakhin L."/>
            <person name="Severinov K."/>
            <person name="Greive S.J."/>
            <person name="Antson A.A."/>
        </authorList>
    </citation>
    <scope>NUCLEOTIDE SEQUENCE [LARGE SCALE GENOMIC DNA]</scope>
    <scope>X-RAY CRYSTALLOGRAPHY (1.20 ANGSTROMS) OF 257-443 IN COMPLEX WITH MAGNESIUM AND OTHER IONS</scope>
    <scope>CATALYTIC ACTIVITY</scope>
    <scope>COFACTOR</scope>
    <scope>MUTAGENESIS OF ASP-294; ASP-300; ASP-347; HIS-427; ASP-428 AND ASP-429</scope>
    <scope>FUNCTION</scope>
</reference>
<evidence type="ECO:0000250" key="1">
    <source>
        <dbReference type="UniProtKB" id="P17312"/>
    </source>
</evidence>
<evidence type="ECO:0000255" key="2">
    <source>
        <dbReference type="HAMAP-Rule" id="MF_04146"/>
    </source>
</evidence>
<evidence type="ECO:0000269" key="3">
    <source>
    </source>
</evidence>
<evidence type="ECO:0000305" key="4"/>
<evidence type="ECO:0000305" key="5">
    <source>
    </source>
</evidence>
<evidence type="ECO:0000312" key="6">
    <source>
        <dbReference type="EMBL" id="API81888.1"/>
    </source>
</evidence>
<evidence type="ECO:0000312" key="7">
    <source>
        <dbReference type="PDB" id="5M1K"/>
    </source>
</evidence>
<evidence type="ECO:0000312" key="8">
    <source>
        <dbReference type="PDB" id="5M1N"/>
    </source>
</evidence>
<evidence type="ECO:0000312" key="9">
    <source>
        <dbReference type="PDB" id="5M1O"/>
    </source>
</evidence>
<evidence type="ECO:0000312" key="10">
    <source>
        <dbReference type="PDB" id="5M1Q"/>
    </source>
</evidence>
<evidence type="ECO:0007744" key="11">
    <source>
        <dbReference type="PDB" id="5M1F"/>
    </source>
</evidence>
<evidence type="ECO:0007829" key="12">
    <source>
        <dbReference type="PDB" id="5M1P"/>
    </source>
</evidence>
<feature type="chain" id="PRO_0000447195" description="Terminase, large subunit">
    <location>
        <begin position="1"/>
        <end position="485"/>
    </location>
</feature>
<feature type="region of interest" description="Nuclease" evidence="1">
    <location>
        <begin position="256"/>
        <end position="438"/>
    </location>
</feature>
<feature type="short sequence motif" description="Walker A motif" evidence="1">
    <location>
        <begin position="124"/>
        <end position="131"/>
    </location>
</feature>
<feature type="short sequence motif" description="Walker B motif" evidence="1">
    <location>
        <begin position="145"/>
        <end position="150"/>
    </location>
</feature>
<feature type="active site" description="For ATPase activity" evidence="2">
    <location>
        <position position="150"/>
    </location>
</feature>
<feature type="binding site" evidence="1">
    <location>
        <position position="97"/>
    </location>
    <ligand>
        <name>ATP</name>
        <dbReference type="ChEBI" id="CHEBI:30616"/>
    </ligand>
</feature>
<feature type="binding site" evidence="1">
    <location>
        <position position="99"/>
    </location>
    <ligand>
        <name>ATP</name>
        <dbReference type="ChEBI" id="CHEBI:30616"/>
    </ligand>
</feature>
<feature type="binding site" evidence="3">
    <location>
        <position position="294"/>
    </location>
    <ligand>
        <name>Mg(2+)</name>
        <dbReference type="ChEBI" id="CHEBI:18420"/>
        <label>1</label>
        <note>catalytic; for nuclease activity</note>
    </ligand>
</feature>
<feature type="binding site" evidence="3">
    <location>
        <position position="294"/>
    </location>
    <ligand>
        <name>Mg(2+)</name>
        <dbReference type="ChEBI" id="CHEBI:18420"/>
        <label>2</label>
        <note>catalytic; for nuclease activity</note>
    </ligand>
</feature>
<feature type="binding site" evidence="3">
    <location>
        <position position="347"/>
    </location>
    <ligand>
        <name>Mg(2+)</name>
        <dbReference type="ChEBI" id="CHEBI:18420"/>
        <label>2</label>
        <note>catalytic; for nuclease activity</note>
    </ligand>
</feature>
<feature type="binding site" evidence="3">
    <location>
        <position position="429"/>
    </location>
    <ligand>
        <name>Mg(2+)</name>
        <dbReference type="ChEBI" id="CHEBI:18420"/>
        <label>1</label>
        <note>catalytic; for nuclease activity</note>
    </ligand>
</feature>
<feature type="site" description="Modulates nuclease activity" evidence="2">
    <location>
        <position position="300"/>
    </location>
</feature>
<feature type="site" description="Possible stabilization of Magnesium 1" evidence="3">
    <location>
        <position position="428"/>
    </location>
</feature>
<feature type="mutagenesis site" description="Complete loss of nuclease activity." evidence="3">
    <original>D</original>
    <variation>N</variation>
    <location>
        <position position="294"/>
    </location>
</feature>
<feature type="mutagenesis site" description="No effect on nuclease activity." evidence="3">
    <original>D</original>
    <variation>N</variation>
    <location>
        <position position="300"/>
    </location>
</feature>
<feature type="mutagenesis site" description="Complete loss of nuclease activity." evidence="3">
    <original>D</original>
    <variation>N</variation>
    <location>
        <position position="347"/>
    </location>
</feature>
<feature type="mutagenesis site" description="Reduced nuclease activity." evidence="3">
    <original>H</original>
    <variation>N</variation>
    <location>
        <position position="427"/>
    </location>
</feature>
<feature type="mutagenesis site" description="Reduced nuclease activity." evidence="3">
    <original>D</original>
    <variation>N</variation>
    <location>
        <position position="428"/>
    </location>
</feature>
<feature type="mutagenesis site" description="Almost complete loss of nuclease activity." evidence="3">
    <original>D</original>
    <variation>N</variation>
    <location>
        <position position="429"/>
    </location>
</feature>
<feature type="helix" evidence="12">
    <location>
        <begin position="263"/>
        <end position="265"/>
    </location>
</feature>
<feature type="strand" evidence="12">
    <location>
        <begin position="267"/>
        <end position="269"/>
    </location>
</feature>
<feature type="strand" evidence="12">
    <location>
        <begin position="272"/>
        <end position="274"/>
    </location>
</feature>
<feature type="strand" evidence="12">
    <location>
        <begin position="277"/>
        <end position="280"/>
    </location>
</feature>
<feature type="strand" evidence="12">
    <location>
        <begin position="289"/>
        <end position="294"/>
    </location>
</feature>
<feature type="strand" evidence="12">
    <location>
        <begin position="298"/>
        <end position="308"/>
    </location>
</feature>
<feature type="turn" evidence="12">
    <location>
        <begin position="309"/>
        <end position="312"/>
    </location>
</feature>
<feature type="strand" evidence="12">
    <location>
        <begin position="313"/>
        <end position="322"/>
    </location>
</feature>
<feature type="helix" evidence="12">
    <location>
        <begin position="325"/>
        <end position="338"/>
    </location>
</feature>
<feature type="strand" evidence="12">
    <location>
        <begin position="343"/>
        <end position="346"/>
    </location>
</feature>
<feature type="helix" evidence="12">
    <location>
        <begin position="353"/>
        <end position="361"/>
    </location>
</feature>
<feature type="strand" evidence="12">
    <location>
        <begin position="366"/>
        <end position="368"/>
    </location>
</feature>
<feature type="helix" evidence="12">
    <location>
        <begin position="374"/>
        <end position="389"/>
    </location>
</feature>
<feature type="strand" evidence="12">
    <location>
        <begin position="394"/>
        <end position="396"/>
    </location>
</feature>
<feature type="helix" evidence="12">
    <location>
        <begin position="399"/>
        <end position="406"/>
    </location>
</feature>
<feature type="strand" evidence="12">
    <location>
        <begin position="408"/>
        <end position="412"/>
    </location>
</feature>
<feature type="strand" evidence="12">
    <location>
        <begin position="418"/>
        <end position="423"/>
    </location>
</feature>
<feature type="helix" evidence="12">
    <location>
        <begin position="429"/>
        <end position="438"/>
    </location>
</feature>
<name>TERL_BPG20</name>
<accession>A0A1L4BKS3</accession>
<accession>A0A1L1QK41</accession>
<accession>A0A1L1QK45</accession>
<comment type="function">
    <text evidence="2 5">The terminase large subunit acts as an ATP driven molecular motor necessary for viral DNA translocation into empty capsids and as an endonuclease that cuts the viral genome to initiate and to end a packaging reaction The terminase lies at a unique vertex of the procapsid and is composed of two subunits, a small terminase subunit involved in viral DNA recognition (packaging sequence), and a large terminase subunit possessing endonucleolytic and ATPase activities. Both terminase subunits heterooligomerize and are docked on the portal protein to form the packaging machine. The terminase large subunit exhibits endonuclease activity and cleaves the viral genome concatemer. Once the capsid is packaged with the DNA, the terminase complex is substituted by the tail.</text>
</comment>
<comment type="cofactor">
    <cofactor evidence="3">
        <name>Mg(2+)</name>
        <dbReference type="ChEBI" id="CHEBI:18420"/>
    </cofactor>
    <text evidence="3">Nuclease activity requires 2 Mg(2+) ions per subunit (PubMed:28100693). Also active in the presence of Mn(2+) or Co(2+) but inactive with Ni(2+), Zn(2+) or Ca(2+) (PubMed:28100693). Cu(2+), Cd(2+) and Cs(2+) do not support catalysis (PubMed:28100693).</text>
</comment>
<comment type="subunit">
    <text evidence="2">Interacts with the terminase small subunit; the active complex is probably heterooligomeric. Interacts with the portal protein.</text>
</comment>
<comment type="domain">
    <text evidence="2">The N-terminus contains an ATPase domain. The C-terminus contains an endonuclease domain.</text>
</comment>
<comment type="similarity">
    <text evidence="2">Belongs to the Tequatrovirus large terminase family.</text>
</comment>
<proteinExistence type="evidence at protein level"/>
<gene>
    <name evidence="6" type="ORF">G20c_80</name>
</gene>